<proteinExistence type="inferred from homology"/>
<reference key="1">
    <citation type="journal article" date="2008" name="J. Bacteriol.">
        <title>The pangenome structure of Escherichia coli: comparative genomic analysis of E. coli commensal and pathogenic isolates.</title>
        <authorList>
            <person name="Rasko D.A."/>
            <person name="Rosovitz M.J."/>
            <person name="Myers G.S.A."/>
            <person name="Mongodin E.F."/>
            <person name="Fricke W.F."/>
            <person name="Gajer P."/>
            <person name="Crabtree J."/>
            <person name="Sebaihia M."/>
            <person name="Thomson N.R."/>
            <person name="Chaudhuri R."/>
            <person name="Henderson I.R."/>
            <person name="Sperandio V."/>
            <person name="Ravel J."/>
        </authorList>
    </citation>
    <scope>NUCLEOTIDE SEQUENCE [LARGE SCALE GENOMIC DNA]</scope>
    <source>
        <strain>HS</strain>
    </source>
</reference>
<gene>
    <name evidence="1" type="primary">astD</name>
    <name type="ordered locus">EcHS_A1829</name>
</gene>
<sequence length="492" mass="52988">MTLWINGDWITGQGASRVKRNPVSGEVLWQGNDAGAAQVEQACRAARAAFPRWARLSLAERQVVVERFAGLLESNKAELTAIIARETGKPRWEAATEVTAMINKIAISIKAYHVRTGEQRSEMPDGAASLRHRPHGVLAVFGPYNFPGHLPNGHIVPALLAGNTIIFKPSELTPWSGEAVMRLWQQAGLPPGVLNLVQGGRETGQALSALEDLDGLLFTGSANTGYQLHRQLSGQPEKILALEMGGNNPLIIDEVADIDAAVHLTIQSAFVTAGQRCTCARRLLLKSGAQGDAFLARLVAVSQRLTPGNWDDEPQPFIGGLISEQAAQQVVTAWQQLEAMGGRTLLAPRLLQSETSLLTPGIIEMTGVAGVPDEEVFGPLLRVWRYDSFEEAILMANNTRFGLSCGLVSPEREKFDQLLLEARAGIVNWNKPLTGAASTAPFGGIGASGNHRPSAWYAADYCAWPMASLESDSLTLPATLNPGLDFSDEVVR</sequence>
<organism>
    <name type="scientific">Escherichia coli O9:H4 (strain HS)</name>
    <dbReference type="NCBI Taxonomy" id="331112"/>
    <lineage>
        <taxon>Bacteria</taxon>
        <taxon>Pseudomonadati</taxon>
        <taxon>Pseudomonadota</taxon>
        <taxon>Gammaproteobacteria</taxon>
        <taxon>Enterobacterales</taxon>
        <taxon>Enterobacteriaceae</taxon>
        <taxon>Escherichia</taxon>
    </lineage>
</organism>
<name>ASTD_ECOHS</name>
<accession>A8A0T8</accession>
<comment type="function">
    <text evidence="1">Catalyzes the NAD-dependent reduction of succinylglutamate semialdehyde into succinylglutamate.</text>
</comment>
<comment type="catalytic activity">
    <reaction evidence="1">
        <text>N-succinyl-L-glutamate 5-semialdehyde + NAD(+) + H2O = N-succinyl-L-glutamate + NADH + 2 H(+)</text>
        <dbReference type="Rhea" id="RHEA:10812"/>
        <dbReference type="ChEBI" id="CHEBI:15377"/>
        <dbReference type="ChEBI" id="CHEBI:15378"/>
        <dbReference type="ChEBI" id="CHEBI:57540"/>
        <dbReference type="ChEBI" id="CHEBI:57945"/>
        <dbReference type="ChEBI" id="CHEBI:58520"/>
        <dbReference type="ChEBI" id="CHEBI:58763"/>
        <dbReference type="EC" id="1.2.1.71"/>
    </reaction>
</comment>
<comment type="pathway">
    <text evidence="1">Amino-acid degradation; L-arginine degradation via AST pathway; L-glutamate and succinate from L-arginine: step 4/5.</text>
</comment>
<comment type="similarity">
    <text evidence="1">Belongs to the aldehyde dehydrogenase family. AstD subfamily.</text>
</comment>
<feature type="chain" id="PRO_1000065755" description="N-succinylglutamate 5-semialdehyde dehydrogenase">
    <location>
        <begin position="1"/>
        <end position="492"/>
    </location>
</feature>
<feature type="active site" evidence="1">
    <location>
        <position position="243"/>
    </location>
</feature>
<feature type="active site" evidence="1">
    <location>
        <position position="277"/>
    </location>
</feature>
<feature type="binding site" evidence="1">
    <location>
        <begin position="220"/>
        <end position="225"/>
    </location>
    <ligand>
        <name>NAD(+)</name>
        <dbReference type="ChEBI" id="CHEBI:57540"/>
    </ligand>
</feature>
<evidence type="ECO:0000255" key="1">
    <source>
        <dbReference type="HAMAP-Rule" id="MF_01174"/>
    </source>
</evidence>
<protein>
    <recommendedName>
        <fullName evidence="1">N-succinylglutamate 5-semialdehyde dehydrogenase</fullName>
        <ecNumber evidence="1">1.2.1.71</ecNumber>
    </recommendedName>
    <alternativeName>
        <fullName evidence="1">Succinylglutamic semialdehyde dehydrogenase</fullName>
        <shortName evidence="1">SGSD</shortName>
    </alternativeName>
</protein>
<dbReference type="EC" id="1.2.1.71" evidence="1"/>
<dbReference type="EMBL" id="CP000802">
    <property type="protein sequence ID" value="ABV06142.1"/>
    <property type="molecule type" value="Genomic_DNA"/>
</dbReference>
<dbReference type="RefSeq" id="WP_000177253.1">
    <property type="nucleotide sequence ID" value="NC_009800.1"/>
</dbReference>
<dbReference type="SMR" id="A8A0T8"/>
<dbReference type="KEGG" id="ecx:EcHS_A1829"/>
<dbReference type="HOGENOM" id="CLU_005391_1_0_6"/>
<dbReference type="UniPathway" id="UPA00185">
    <property type="reaction ID" value="UER00282"/>
</dbReference>
<dbReference type="GO" id="GO:0004030">
    <property type="term" value="F:aldehyde dehydrogenase [NAD(P)+] activity"/>
    <property type="evidence" value="ECO:0007669"/>
    <property type="project" value="UniProtKB-ARBA"/>
</dbReference>
<dbReference type="GO" id="GO:0043824">
    <property type="term" value="F:succinylglutamate-semialdehyde dehydrogenase activity"/>
    <property type="evidence" value="ECO:0007669"/>
    <property type="project" value="UniProtKB-EC"/>
</dbReference>
<dbReference type="GO" id="GO:0019544">
    <property type="term" value="P:arginine catabolic process to glutamate"/>
    <property type="evidence" value="ECO:0007669"/>
    <property type="project" value="UniProtKB-UniRule"/>
</dbReference>
<dbReference type="GO" id="GO:0019545">
    <property type="term" value="P:arginine catabolic process to succinate"/>
    <property type="evidence" value="ECO:0007669"/>
    <property type="project" value="UniProtKB-UniRule"/>
</dbReference>
<dbReference type="CDD" id="cd07095">
    <property type="entry name" value="ALDH_SGSD_AstD"/>
    <property type="match status" value="1"/>
</dbReference>
<dbReference type="FunFam" id="3.40.309.10:FF:000013">
    <property type="entry name" value="N-succinylglutamate 5-semialdehyde dehydrogenase"/>
    <property type="match status" value="1"/>
</dbReference>
<dbReference type="FunFam" id="3.40.605.10:FF:000010">
    <property type="entry name" value="N-succinylglutamate 5-semialdehyde dehydrogenase"/>
    <property type="match status" value="1"/>
</dbReference>
<dbReference type="Gene3D" id="3.40.605.10">
    <property type="entry name" value="Aldehyde Dehydrogenase, Chain A, domain 1"/>
    <property type="match status" value="1"/>
</dbReference>
<dbReference type="Gene3D" id="3.40.309.10">
    <property type="entry name" value="Aldehyde Dehydrogenase, Chain A, domain 2"/>
    <property type="match status" value="1"/>
</dbReference>
<dbReference type="HAMAP" id="MF_01174">
    <property type="entry name" value="Aldedh_AstD"/>
    <property type="match status" value="1"/>
</dbReference>
<dbReference type="InterPro" id="IPR016161">
    <property type="entry name" value="Ald_DH/histidinol_DH"/>
</dbReference>
<dbReference type="InterPro" id="IPR016163">
    <property type="entry name" value="Ald_DH_C"/>
</dbReference>
<dbReference type="InterPro" id="IPR016160">
    <property type="entry name" value="Ald_DH_CS_CYS"/>
</dbReference>
<dbReference type="InterPro" id="IPR029510">
    <property type="entry name" value="Ald_DH_CS_GLU"/>
</dbReference>
<dbReference type="InterPro" id="IPR016162">
    <property type="entry name" value="Ald_DH_N"/>
</dbReference>
<dbReference type="InterPro" id="IPR015590">
    <property type="entry name" value="Aldehyde_DH_dom"/>
</dbReference>
<dbReference type="InterPro" id="IPR017649">
    <property type="entry name" value="SuccinylGlu_semiald_DH_AstD"/>
</dbReference>
<dbReference type="NCBIfam" id="TIGR03240">
    <property type="entry name" value="arg_catab_astD"/>
    <property type="match status" value="1"/>
</dbReference>
<dbReference type="NCBIfam" id="NF006992">
    <property type="entry name" value="PRK09457.1"/>
    <property type="match status" value="1"/>
</dbReference>
<dbReference type="PANTHER" id="PTHR11699">
    <property type="entry name" value="ALDEHYDE DEHYDROGENASE-RELATED"/>
    <property type="match status" value="1"/>
</dbReference>
<dbReference type="Pfam" id="PF00171">
    <property type="entry name" value="Aldedh"/>
    <property type="match status" value="1"/>
</dbReference>
<dbReference type="SUPFAM" id="SSF53720">
    <property type="entry name" value="ALDH-like"/>
    <property type="match status" value="1"/>
</dbReference>
<dbReference type="PROSITE" id="PS00070">
    <property type="entry name" value="ALDEHYDE_DEHYDR_CYS"/>
    <property type="match status" value="1"/>
</dbReference>
<dbReference type="PROSITE" id="PS00687">
    <property type="entry name" value="ALDEHYDE_DEHYDR_GLU"/>
    <property type="match status" value="1"/>
</dbReference>
<keyword id="KW-0056">Arginine metabolism</keyword>
<keyword id="KW-0520">NAD</keyword>
<keyword id="KW-0560">Oxidoreductase</keyword>